<gene>
    <name evidence="1" type="primary">ppk</name>
    <name type="ordered locus">ABAYE2803</name>
</gene>
<accession>B0V9M3</accession>
<dbReference type="EC" id="2.7.4.1" evidence="1"/>
<dbReference type="EMBL" id="CU459141">
    <property type="protein sequence ID" value="CAM87631.1"/>
    <property type="molecule type" value="Genomic_DNA"/>
</dbReference>
<dbReference type="SMR" id="B0V9M3"/>
<dbReference type="EnsemblBacteria" id="CAM87631">
    <property type="protein sequence ID" value="CAM87631"/>
    <property type="gene ID" value="ABAYE2803"/>
</dbReference>
<dbReference type="KEGG" id="aby:ABAYE2803"/>
<dbReference type="HOGENOM" id="CLU_009678_5_0_6"/>
<dbReference type="GO" id="GO:0009358">
    <property type="term" value="C:polyphosphate kinase complex"/>
    <property type="evidence" value="ECO:0007669"/>
    <property type="project" value="InterPro"/>
</dbReference>
<dbReference type="GO" id="GO:0005524">
    <property type="term" value="F:ATP binding"/>
    <property type="evidence" value="ECO:0007669"/>
    <property type="project" value="UniProtKB-KW"/>
</dbReference>
<dbReference type="GO" id="GO:0046872">
    <property type="term" value="F:metal ion binding"/>
    <property type="evidence" value="ECO:0007669"/>
    <property type="project" value="UniProtKB-KW"/>
</dbReference>
<dbReference type="GO" id="GO:0008976">
    <property type="term" value="F:polyphosphate kinase activity"/>
    <property type="evidence" value="ECO:0007669"/>
    <property type="project" value="UniProtKB-UniRule"/>
</dbReference>
<dbReference type="GO" id="GO:0006799">
    <property type="term" value="P:polyphosphate biosynthetic process"/>
    <property type="evidence" value="ECO:0007669"/>
    <property type="project" value="UniProtKB-UniRule"/>
</dbReference>
<dbReference type="CDD" id="cd09165">
    <property type="entry name" value="PLDc_PaPPK1_C1_like"/>
    <property type="match status" value="1"/>
</dbReference>
<dbReference type="CDD" id="cd09168">
    <property type="entry name" value="PLDc_PaPPK1_C2_like"/>
    <property type="match status" value="1"/>
</dbReference>
<dbReference type="Gene3D" id="3.30.870.10">
    <property type="entry name" value="Endonuclease Chain A"/>
    <property type="match status" value="2"/>
</dbReference>
<dbReference type="Gene3D" id="3.30.1840.10">
    <property type="entry name" value="Polyphosphate kinase middle domain"/>
    <property type="match status" value="1"/>
</dbReference>
<dbReference type="Gene3D" id="1.20.58.310">
    <property type="entry name" value="Polyphosphate kinase N-terminal domain"/>
    <property type="match status" value="1"/>
</dbReference>
<dbReference type="HAMAP" id="MF_00347">
    <property type="entry name" value="Polyphosphate_kinase"/>
    <property type="match status" value="1"/>
</dbReference>
<dbReference type="InterPro" id="IPR003414">
    <property type="entry name" value="PP_kinase"/>
</dbReference>
<dbReference type="InterPro" id="IPR041108">
    <property type="entry name" value="PP_kinase_C_1"/>
</dbReference>
<dbReference type="InterPro" id="IPR024953">
    <property type="entry name" value="PP_kinase_middle"/>
</dbReference>
<dbReference type="InterPro" id="IPR036830">
    <property type="entry name" value="PP_kinase_middle_dom_sf"/>
</dbReference>
<dbReference type="InterPro" id="IPR025200">
    <property type="entry name" value="PPK_C_dom2"/>
</dbReference>
<dbReference type="InterPro" id="IPR025198">
    <property type="entry name" value="PPK_N_dom"/>
</dbReference>
<dbReference type="InterPro" id="IPR036832">
    <property type="entry name" value="PPK_N_dom_sf"/>
</dbReference>
<dbReference type="NCBIfam" id="TIGR03705">
    <property type="entry name" value="poly_P_kin"/>
    <property type="match status" value="1"/>
</dbReference>
<dbReference type="NCBIfam" id="NF003917">
    <property type="entry name" value="PRK05443.1-1"/>
    <property type="match status" value="1"/>
</dbReference>
<dbReference type="NCBIfam" id="NF003918">
    <property type="entry name" value="PRK05443.1-2"/>
    <property type="match status" value="1"/>
</dbReference>
<dbReference type="NCBIfam" id="NF003921">
    <property type="entry name" value="PRK05443.2-2"/>
    <property type="match status" value="1"/>
</dbReference>
<dbReference type="PANTHER" id="PTHR30218">
    <property type="entry name" value="POLYPHOSPHATE KINASE"/>
    <property type="match status" value="1"/>
</dbReference>
<dbReference type="PANTHER" id="PTHR30218:SF0">
    <property type="entry name" value="POLYPHOSPHATE KINASE"/>
    <property type="match status" value="1"/>
</dbReference>
<dbReference type="Pfam" id="PF02503">
    <property type="entry name" value="PP_kinase"/>
    <property type="match status" value="1"/>
</dbReference>
<dbReference type="Pfam" id="PF13090">
    <property type="entry name" value="PP_kinase_C"/>
    <property type="match status" value="1"/>
</dbReference>
<dbReference type="Pfam" id="PF17941">
    <property type="entry name" value="PP_kinase_C_1"/>
    <property type="match status" value="1"/>
</dbReference>
<dbReference type="Pfam" id="PF13089">
    <property type="entry name" value="PP_kinase_N"/>
    <property type="match status" value="1"/>
</dbReference>
<dbReference type="PIRSF" id="PIRSF015589">
    <property type="entry name" value="PP_kinase"/>
    <property type="match status" value="1"/>
</dbReference>
<dbReference type="SUPFAM" id="SSF56024">
    <property type="entry name" value="Phospholipase D/nuclease"/>
    <property type="match status" value="2"/>
</dbReference>
<dbReference type="SUPFAM" id="SSF143724">
    <property type="entry name" value="PHP14-like"/>
    <property type="match status" value="1"/>
</dbReference>
<dbReference type="SUPFAM" id="SSF140356">
    <property type="entry name" value="PPK N-terminal domain-like"/>
    <property type="match status" value="1"/>
</dbReference>
<name>PPK1_ACIBY</name>
<keyword id="KW-0067">ATP-binding</keyword>
<keyword id="KW-0418">Kinase</keyword>
<keyword id="KW-0460">Magnesium</keyword>
<keyword id="KW-0479">Metal-binding</keyword>
<keyword id="KW-0547">Nucleotide-binding</keyword>
<keyword id="KW-0597">Phosphoprotein</keyword>
<keyword id="KW-0808">Transferase</keyword>
<sequence>MNTAITATTPTEYSYNDRYINRELSILDFHLRVLEQAVDPLHPLLERMNFLLIFSRNLDEFFEIRVAGVMEQFALGNESRSPDGLTPRQVLQKISETAHTAIERQYRILNEEILPKLREEDICFLRRGELTPAQSAWVKKYFQEQVAPVLTPISLDPAHPFPRLVNKSLNFIVTLEGKDAFGRQIDLAVVPAPRSLPRVVRLPDELTGGKEHHVMLSAIIHEHVSDLFPGMTATGCYQFRVTRNADLALNEDVEDLAKALKGELSSRRFGRAVRLEVTQNCPQHIYEYLLEEFDLNEEQLYKVDGPVNLARLVSNFKRPHLRYDSHTPVVPKVFKKTESIFSAMQKQDILLHHPFESFAPVIQLLREAARDPQVLAIKQTLYRSGADSEIVQVLAEAARNGKEVTAVIELRARFDEESNIEVANVLQEAGAVVVYGIVGYKTHAKMIMVVRRENNKLVRYVHLGTGNYHAMNARIYTDYGLMTTDKDLCEDVHRIFQELTGMGKMAKLKKLLHAPFTLHAQLINFIDEEIANAKAGRKAQIIVKVNALTEVQLINKLYEASQAGVQVDLIIRSICCLRPGLPNLSENIRVRSIVGRFLEHTRVYYFSNNGDARIYCSSADWMDRNLFNRVEACFPIEDPALKKRIYQQGLLNYLQDNQQAWLLQGDGTWIRAKPAEGEKLHNAQRELLETFK</sequence>
<organism>
    <name type="scientific">Acinetobacter baumannii (strain AYE)</name>
    <dbReference type="NCBI Taxonomy" id="509173"/>
    <lineage>
        <taxon>Bacteria</taxon>
        <taxon>Pseudomonadati</taxon>
        <taxon>Pseudomonadota</taxon>
        <taxon>Gammaproteobacteria</taxon>
        <taxon>Moraxellales</taxon>
        <taxon>Moraxellaceae</taxon>
        <taxon>Acinetobacter</taxon>
        <taxon>Acinetobacter calcoaceticus/baumannii complex</taxon>
    </lineage>
</organism>
<comment type="function">
    <text evidence="1">Catalyzes the reversible transfer of the terminal phosphate of ATP to form a long-chain polyphosphate (polyP).</text>
</comment>
<comment type="catalytic activity">
    <reaction evidence="1">
        <text>[phosphate](n) + ATP = [phosphate](n+1) + ADP</text>
        <dbReference type="Rhea" id="RHEA:19573"/>
        <dbReference type="Rhea" id="RHEA-COMP:9859"/>
        <dbReference type="Rhea" id="RHEA-COMP:14280"/>
        <dbReference type="ChEBI" id="CHEBI:16838"/>
        <dbReference type="ChEBI" id="CHEBI:30616"/>
        <dbReference type="ChEBI" id="CHEBI:456216"/>
        <dbReference type="EC" id="2.7.4.1"/>
    </reaction>
</comment>
<comment type="cofactor">
    <cofactor evidence="1">
        <name>Mg(2+)</name>
        <dbReference type="ChEBI" id="CHEBI:18420"/>
    </cofactor>
</comment>
<comment type="PTM">
    <text evidence="1">An intermediate of this reaction is the autophosphorylated ppk in which a phosphate is covalently linked to a histidine residue through a N-P bond.</text>
</comment>
<comment type="similarity">
    <text evidence="1">Belongs to the polyphosphate kinase 1 (PPK1) family.</text>
</comment>
<feature type="chain" id="PRO_1000120494" description="Polyphosphate kinase">
    <location>
        <begin position="1"/>
        <end position="692"/>
    </location>
</feature>
<feature type="active site" description="Phosphohistidine intermediate" evidence="1">
    <location>
        <position position="443"/>
    </location>
</feature>
<feature type="binding site" evidence="1">
    <location>
        <position position="57"/>
    </location>
    <ligand>
        <name>ATP</name>
        <dbReference type="ChEBI" id="CHEBI:30616"/>
    </ligand>
</feature>
<feature type="binding site" evidence="1">
    <location>
        <position position="383"/>
    </location>
    <ligand>
        <name>Mg(2+)</name>
        <dbReference type="ChEBI" id="CHEBI:18420"/>
    </ligand>
</feature>
<feature type="binding site" evidence="1">
    <location>
        <position position="413"/>
    </location>
    <ligand>
        <name>Mg(2+)</name>
        <dbReference type="ChEBI" id="CHEBI:18420"/>
    </ligand>
</feature>
<feature type="binding site" evidence="1">
    <location>
        <position position="476"/>
    </location>
    <ligand>
        <name>ATP</name>
        <dbReference type="ChEBI" id="CHEBI:30616"/>
    </ligand>
</feature>
<feature type="binding site" evidence="1">
    <location>
        <position position="572"/>
    </location>
    <ligand>
        <name>ATP</name>
        <dbReference type="ChEBI" id="CHEBI:30616"/>
    </ligand>
</feature>
<feature type="binding site" evidence="1">
    <location>
        <position position="600"/>
    </location>
    <ligand>
        <name>ATP</name>
        <dbReference type="ChEBI" id="CHEBI:30616"/>
    </ligand>
</feature>
<proteinExistence type="inferred from homology"/>
<reference key="1">
    <citation type="journal article" date="2008" name="PLoS ONE">
        <title>Comparative analysis of Acinetobacters: three genomes for three lifestyles.</title>
        <authorList>
            <person name="Vallenet D."/>
            <person name="Nordmann P."/>
            <person name="Barbe V."/>
            <person name="Poirel L."/>
            <person name="Mangenot S."/>
            <person name="Bataille E."/>
            <person name="Dossat C."/>
            <person name="Gas S."/>
            <person name="Kreimeyer A."/>
            <person name="Lenoble P."/>
            <person name="Oztas S."/>
            <person name="Poulain J."/>
            <person name="Segurens B."/>
            <person name="Robert C."/>
            <person name="Abergel C."/>
            <person name="Claverie J.-M."/>
            <person name="Raoult D."/>
            <person name="Medigue C."/>
            <person name="Weissenbach J."/>
            <person name="Cruveiller S."/>
        </authorList>
    </citation>
    <scope>NUCLEOTIDE SEQUENCE [LARGE SCALE GENOMIC DNA]</scope>
    <source>
        <strain>AYE</strain>
    </source>
</reference>
<protein>
    <recommendedName>
        <fullName evidence="1">Polyphosphate kinase</fullName>
        <ecNumber evidence="1">2.7.4.1</ecNumber>
    </recommendedName>
    <alternativeName>
        <fullName evidence="1">ATP-polyphosphate phosphotransferase</fullName>
    </alternativeName>
    <alternativeName>
        <fullName evidence="1">Polyphosphoric acid kinase</fullName>
    </alternativeName>
</protein>
<evidence type="ECO:0000255" key="1">
    <source>
        <dbReference type="HAMAP-Rule" id="MF_00347"/>
    </source>
</evidence>